<protein>
    <recommendedName>
        <fullName>Guanine nucleotide-binding protein G(I)/G(S)/G(O) subunit gamma-2</fullName>
    </recommendedName>
    <alternativeName>
        <fullName>G gamma-I</fullName>
    </alternativeName>
</protein>
<organism>
    <name type="scientific">Mus musculus</name>
    <name type="common">Mouse</name>
    <dbReference type="NCBI Taxonomy" id="10090"/>
    <lineage>
        <taxon>Eukaryota</taxon>
        <taxon>Metazoa</taxon>
        <taxon>Chordata</taxon>
        <taxon>Craniata</taxon>
        <taxon>Vertebrata</taxon>
        <taxon>Euteleostomi</taxon>
        <taxon>Mammalia</taxon>
        <taxon>Eutheria</taxon>
        <taxon>Euarchontoglires</taxon>
        <taxon>Glires</taxon>
        <taxon>Rodentia</taxon>
        <taxon>Myomorpha</taxon>
        <taxon>Muroidea</taxon>
        <taxon>Muridae</taxon>
        <taxon>Murinae</taxon>
        <taxon>Mus</taxon>
        <taxon>Mus</taxon>
    </lineage>
</organism>
<feature type="initiator methionine" description="Removed" evidence="2">
    <location>
        <position position="1"/>
    </location>
</feature>
<feature type="chain" id="PRO_0000012613" description="Guanine nucleotide-binding protein G(I)/G(S)/G(O) subunit gamma-2" evidence="2">
    <location>
        <begin position="2"/>
        <end position="68"/>
    </location>
</feature>
<feature type="propeptide" id="PRO_0000012614" description="Removed in mature form">
    <location>
        <begin position="69"/>
        <end position="71"/>
    </location>
</feature>
<feature type="modified residue" description="N-acetylalanine" evidence="2">
    <location>
        <position position="2"/>
    </location>
</feature>
<feature type="modified residue" description="Cysteine methyl ester" evidence="2">
    <location>
        <position position="68"/>
    </location>
</feature>
<feature type="lipid moiety-binding region" description="S-geranylgeranyl cysteine" evidence="2">
    <location>
        <position position="68"/>
    </location>
</feature>
<feature type="helix" evidence="4">
    <location>
        <begin position="10"/>
        <end position="23"/>
    </location>
</feature>
<feature type="helix" evidence="4">
    <location>
        <begin position="30"/>
        <end position="44"/>
    </location>
</feature>
<feature type="helix" evidence="4">
    <location>
        <begin position="45"/>
        <end position="47"/>
    </location>
</feature>
<feature type="turn" evidence="4">
    <location>
        <begin position="49"/>
        <end position="51"/>
    </location>
</feature>
<feature type="turn" evidence="4">
    <location>
        <begin position="56"/>
        <end position="58"/>
    </location>
</feature>
<feature type="turn" evidence="5">
    <location>
        <begin position="60"/>
        <end position="62"/>
    </location>
</feature>
<keyword id="KW-0002">3D-structure</keyword>
<keyword id="KW-0007">Acetylation</keyword>
<keyword id="KW-1003">Cell membrane</keyword>
<keyword id="KW-0449">Lipoprotein</keyword>
<keyword id="KW-0472">Membrane</keyword>
<keyword id="KW-0488">Methylation</keyword>
<keyword id="KW-0636">Prenylation</keyword>
<keyword id="KW-1185">Reference proteome</keyword>
<keyword id="KW-0807">Transducer</keyword>
<dbReference type="EMBL" id="AF098489">
    <property type="protein sequence ID" value="AAD16272.1"/>
    <property type="molecule type" value="Genomic_DNA"/>
</dbReference>
<dbReference type="EMBL" id="AF098488">
    <property type="protein sequence ID" value="AAD16272.1"/>
    <property type="status" value="JOINED"/>
    <property type="molecule type" value="Genomic_DNA"/>
</dbReference>
<dbReference type="EMBL" id="AK003588">
    <property type="protein sequence ID" value="BAB22878.1"/>
    <property type="molecule type" value="mRNA"/>
</dbReference>
<dbReference type="EMBL" id="AK012405">
    <property type="protein sequence ID" value="BAB28219.1"/>
    <property type="molecule type" value="mRNA"/>
</dbReference>
<dbReference type="EMBL" id="AK036138">
    <property type="protein sequence ID" value="BAC29316.1"/>
    <property type="molecule type" value="mRNA"/>
</dbReference>
<dbReference type="EMBL" id="AK075698">
    <property type="protein sequence ID" value="BAC35896.1"/>
    <property type="molecule type" value="mRNA"/>
</dbReference>
<dbReference type="EMBL" id="AK158697">
    <property type="protein sequence ID" value="BAE34615.1"/>
    <property type="molecule type" value="mRNA"/>
</dbReference>
<dbReference type="EMBL" id="AK160396">
    <property type="protein sequence ID" value="BAE35765.1"/>
    <property type="molecule type" value="mRNA"/>
</dbReference>
<dbReference type="EMBL" id="BC021599">
    <property type="protein sequence ID" value="AAH21599.1"/>
    <property type="molecule type" value="mRNA"/>
</dbReference>
<dbReference type="EMBL" id="U38496">
    <property type="protein sequence ID" value="AAB01727.1"/>
    <property type="molecule type" value="mRNA"/>
</dbReference>
<dbReference type="CCDS" id="CCDS26840.1"/>
<dbReference type="PIR" id="D36204">
    <property type="entry name" value="D36204"/>
</dbReference>
<dbReference type="RefSeq" id="NP_001033726.1">
    <property type="nucleotide sequence ID" value="NM_001038637.1"/>
</dbReference>
<dbReference type="RefSeq" id="NP_001272837.1">
    <property type="nucleotide sequence ID" value="NM_001285908.1"/>
</dbReference>
<dbReference type="RefSeq" id="NP_001272838.1">
    <property type="nucleotide sequence ID" value="NM_001285909.1"/>
</dbReference>
<dbReference type="RefSeq" id="NP_001272839.1">
    <property type="nucleotide sequence ID" value="NM_001285910.1"/>
</dbReference>
<dbReference type="RefSeq" id="NP_001272840.1">
    <property type="nucleotide sequence ID" value="NM_001285911.1"/>
</dbReference>
<dbReference type="RefSeq" id="NP_001411396.1">
    <property type="nucleotide sequence ID" value="NM_001424467.1"/>
</dbReference>
<dbReference type="RefSeq" id="NP_001411397.1">
    <property type="nucleotide sequence ID" value="NM_001424468.1"/>
</dbReference>
<dbReference type="RefSeq" id="NP_034445.1">
    <property type="nucleotide sequence ID" value="NM_010315.4"/>
</dbReference>
<dbReference type="RefSeq" id="XP_030103512.1">
    <property type="nucleotide sequence ID" value="XM_030247652.1"/>
</dbReference>
<dbReference type="PDB" id="6RMV">
    <property type="method" value="X-ray"/>
    <property type="resolution" value="1.94 A"/>
    <property type="chains" value="B=1-71"/>
</dbReference>
<dbReference type="PDB" id="7PIV">
    <property type="method" value="EM"/>
    <property type="resolution" value="2.86 A"/>
    <property type="chains" value="G=1-71"/>
</dbReference>
<dbReference type="PDB" id="7Y12">
    <property type="method" value="EM"/>
    <property type="resolution" value="3.10 A"/>
    <property type="chains" value="C=1-71"/>
</dbReference>
<dbReference type="PDB" id="7Y15">
    <property type="method" value="EM"/>
    <property type="resolution" value="2.90 A"/>
    <property type="chains" value="C=1-71"/>
</dbReference>
<dbReference type="PDB" id="8IHB">
    <property type="method" value="EM"/>
    <property type="resolution" value="2.85 A"/>
    <property type="chains" value="C=3-71"/>
</dbReference>
<dbReference type="PDB" id="8IHF">
    <property type="method" value="EM"/>
    <property type="resolution" value="2.97 A"/>
    <property type="chains" value="C=2-71"/>
</dbReference>
<dbReference type="PDB" id="8IHH">
    <property type="method" value="EM"/>
    <property type="resolution" value="3.06 A"/>
    <property type="chains" value="C=2-71"/>
</dbReference>
<dbReference type="PDB" id="8IHI">
    <property type="method" value="EM"/>
    <property type="resolution" value="3.11 A"/>
    <property type="chains" value="C=2-71"/>
</dbReference>
<dbReference type="PDB" id="8IHJ">
    <property type="method" value="EM"/>
    <property type="resolution" value="3.07 A"/>
    <property type="chains" value="C=2-71"/>
</dbReference>
<dbReference type="PDB" id="8JSO">
    <property type="method" value="EM"/>
    <property type="resolution" value="3.40 A"/>
    <property type="chains" value="Y=1-71"/>
</dbReference>
<dbReference type="PDB" id="9IZF">
    <property type="method" value="EM"/>
    <property type="resolution" value="3.14 A"/>
    <property type="chains" value="C=2-71"/>
</dbReference>
<dbReference type="PDB" id="9IZG">
    <property type="method" value="EM"/>
    <property type="resolution" value="3.04 A"/>
    <property type="chains" value="C=2-71"/>
</dbReference>
<dbReference type="PDB" id="9IZH">
    <property type="method" value="EM"/>
    <property type="resolution" value="3.04 A"/>
    <property type="chains" value="C=2-71"/>
</dbReference>
<dbReference type="PDBsum" id="6RMV"/>
<dbReference type="PDBsum" id="7PIV"/>
<dbReference type="PDBsum" id="7Y12"/>
<dbReference type="PDBsum" id="7Y15"/>
<dbReference type="PDBsum" id="8IHB"/>
<dbReference type="PDBsum" id="8IHF"/>
<dbReference type="PDBsum" id="8IHH"/>
<dbReference type="PDBsum" id="8IHI"/>
<dbReference type="PDBsum" id="8IHJ"/>
<dbReference type="PDBsum" id="8JSO"/>
<dbReference type="PDBsum" id="9IZF"/>
<dbReference type="PDBsum" id="9IZG"/>
<dbReference type="PDBsum" id="9IZH"/>
<dbReference type="EMDB" id="EMD-13454"/>
<dbReference type="EMDB" id="EMD-33554"/>
<dbReference type="EMDB" id="EMD-33557"/>
<dbReference type="EMDB" id="EMD-35442"/>
<dbReference type="EMDB" id="EMD-35443"/>
<dbReference type="EMDB" id="EMD-35444"/>
<dbReference type="EMDB" id="EMD-35445"/>
<dbReference type="EMDB" id="EMD-35446"/>
<dbReference type="EMDB" id="EMD-36625"/>
<dbReference type="EMDB" id="EMD-61031"/>
<dbReference type="EMDB" id="EMD-61032"/>
<dbReference type="EMDB" id="EMD-61033"/>
<dbReference type="SMR" id="P63213"/>
<dbReference type="BioGRID" id="199986">
    <property type="interactions" value="20"/>
</dbReference>
<dbReference type="CORUM" id="P63213"/>
<dbReference type="FunCoup" id="P63213">
    <property type="interactions" value="1164"/>
</dbReference>
<dbReference type="IntAct" id="P63213">
    <property type="interactions" value="1"/>
</dbReference>
<dbReference type="STRING" id="10090.ENSMUSP00000125697"/>
<dbReference type="GlyGen" id="P63213">
    <property type="glycosylation" value="1 site, 1 N-linked glycan (1 site)"/>
</dbReference>
<dbReference type="iPTMnet" id="P63213"/>
<dbReference type="PhosphoSitePlus" id="P63213"/>
<dbReference type="SwissPalm" id="P63213"/>
<dbReference type="jPOST" id="P63213"/>
<dbReference type="PaxDb" id="10090-ENSMUSP00000125697"/>
<dbReference type="PeptideAtlas" id="P63213"/>
<dbReference type="ProteomicsDB" id="271194"/>
<dbReference type="Pumba" id="P63213"/>
<dbReference type="TopDownProteomics" id="P63213"/>
<dbReference type="Antibodypedia" id="198">
    <property type="antibodies" value="149 antibodies from 27 providers"/>
</dbReference>
<dbReference type="DNASU" id="14702"/>
<dbReference type="Ensembl" id="ENSMUST00000055100.14">
    <property type="protein sequence ID" value="ENSMUSP00000055256.8"/>
    <property type="gene ID" value="ENSMUSG00000043004.14"/>
</dbReference>
<dbReference type="Ensembl" id="ENSMUST00000159028.8">
    <property type="protein sequence ID" value="ENSMUSP00000125141.2"/>
    <property type="gene ID" value="ENSMUSG00000043004.14"/>
</dbReference>
<dbReference type="Ensembl" id="ENSMUST00000159073.8">
    <property type="protein sequence ID" value="ENSMUSP00000125000.2"/>
    <property type="gene ID" value="ENSMUSG00000043004.14"/>
</dbReference>
<dbReference type="Ensembl" id="ENSMUST00000160013.8">
    <property type="protein sequence ID" value="ENSMUSP00000125697.2"/>
    <property type="gene ID" value="ENSMUSG00000043004.14"/>
</dbReference>
<dbReference type="Ensembl" id="ENSMUST00000161247.2">
    <property type="protein sequence ID" value="ENSMUSP00000124725.2"/>
    <property type="gene ID" value="ENSMUSG00000043004.14"/>
</dbReference>
<dbReference type="Ensembl" id="ENSMUST00000162425.8">
    <property type="protein sequence ID" value="ENSMUSP00000124153.2"/>
    <property type="gene ID" value="ENSMUSG00000043004.14"/>
</dbReference>
<dbReference type="GeneID" id="14702"/>
<dbReference type="KEGG" id="mmu:14702"/>
<dbReference type="UCSC" id="uc007siw.1">
    <property type="organism name" value="mouse"/>
</dbReference>
<dbReference type="AGR" id="MGI:102705"/>
<dbReference type="CTD" id="54331"/>
<dbReference type="MGI" id="MGI:102705">
    <property type="gene designation" value="Gng2"/>
</dbReference>
<dbReference type="VEuPathDB" id="HostDB:ENSMUSG00000043004"/>
<dbReference type="eggNOG" id="KOG4119">
    <property type="taxonomic scope" value="Eukaryota"/>
</dbReference>
<dbReference type="GeneTree" id="ENSGT01100000263497"/>
<dbReference type="HOGENOM" id="CLU_168377_0_1_1"/>
<dbReference type="InParanoid" id="P63213"/>
<dbReference type="OMA" id="GKQQPPM"/>
<dbReference type="OrthoDB" id="6264244at2759"/>
<dbReference type="PhylomeDB" id="P63213"/>
<dbReference type="TreeFam" id="TF319909"/>
<dbReference type="Reactome" id="R-MMU-1296041">
    <property type="pathway name" value="Activation of G protein gated Potassium channels"/>
</dbReference>
<dbReference type="Reactome" id="R-MMU-202040">
    <property type="pathway name" value="G-protein activation"/>
</dbReference>
<dbReference type="Reactome" id="R-MMU-381676">
    <property type="pathway name" value="Glucagon-like Peptide-1 (GLP1) regulates insulin secretion"/>
</dbReference>
<dbReference type="Reactome" id="R-MMU-392170">
    <property type="pathway name" value="ADP signalling through P2Y purinoceptor 12"/>
</dbReference>
<dbReference type="Reactome" id="R-MMU-392451">
    <property type="pathway name" value="G beta:gamma signalling through PI3Kgamma"/>
</dbReference>
<dbReference type="Reactome" id="R-MMU-392851">
    <property type="pathway name" value="Prostacyclin signalling through prostacyclin receptor"/>
</dbReference>
<dbReference type="Reactome" id="R-MMU-400042">
    <property type="pathway name" value="Adrenaline,noradrenaline inhibits insulin secretion"/>
</dbReference>
<dbReference type="Reactome" id="R-MMU-4086398">
    <property type="pathway name" value="Ca2+ pathway"/>
</dbReference>
<dbReference type="Reactome" id="R-MMU-416476">
    <property type="pathway name" value="G alpha (q) signalling events"/>
</dbReference>
<dbReference type="Reactome" id="R-MMU-416482">
    <property type="pathway name" value="G alpha (12/13) signalling events"/>
</dbReference>
<dbReference type="Reactome" id="R-MMU-418217">
    <property type="pathway name" value="G beta:gamma signalling through PLC beta"/>
</dbReference>
<dbReference type="Reactome" id="R-MMU-418555">
    <property type="pathway name" value="G alpha (s) signalling events"/>
</dbReference>
<dbReference type="Reactome" id="R-MMU-418592">
    <property type="pathway name" value="ADP signalling through P2Y purinoceptor 1"/>
</dbReference>
<dbReference type="Reactome" id="R-MMU-418594">
    <property type="pathway name" value="G alpha (i) signalling events"/>
</dbReference>
<dbReference type="Reactome" id="R-MMU-418597">
    <property type="pathway name" value="G alpha (z) signalling events"/>
</dbReference>
<dbReference type="Reactome" id="R-MMU-420092">
    <property type="pathway name" value="Glucagon-type ligand receptors"/>
</dbReference>
<dbReference type="Reactome" id="R-MMU-428930">
    <property type="pathway name" value="Thromboxane signalling through TP receptor"/>
</dbReference>
<dbReference type="Reactome" id="R-MMU-432040">
    <property type="pathway name" value="Vasopressin regulates renal water homeostasis via Aquaporins"/>
</dbReference>
<dbReference type="Reactome" id="R-MMU-456926">
    <property type="pathway name" value="Thrombin signalling through proteinase activated receptors (PARs)"/>
</dbReference>
<dbReference type="Reactome" id="R-MMU-500657">
    <property type="pathway name" value="Presynaptic function of Kainate receptors"/>
</dbReference>
<dbReference type="Reactome" id="R-MMU-6814122">
    <property type="pathway name" value="Cooperation of PDCL (PhLP1) and TRiC/CCT in G-protein beta folding"/>
</dbReference>
<dbReference type="Reactome" id="R-MMU-8964315">
    <property type="pathway name" value="G beta:gamma signalling through BTK"/>
</dbReference>
<dbReference type="Reactome" id="R-MMU-8964616">
    <property type="pathway name" value="G beta:gamma signalling through CDC42"/>
</dbReference>
<dbReference type="Reactome" id="R-MMU-9009391">
    <property type="pathway name" value="Extra-nuclear estrogen signaling"/>
</dbReference>
<dbReference type="Reactome" id="R-MMU-9634597">
    <property type="pathway name" value="GPER1 signaling"/>
</dbReference>
<dbReference type="Reactome" id="R-MMU-9856530">
    <property type="pathway name" value="High laminar flow shear stress activates signaling by PIEZO1 and PECAM1:CDH5:KDR in endothelial cells"/>
</dbReference>
<dbReference type="Reactome" id="R-MMU-997272">
    <property type="pathway name" value="Inhibition of voltage gated Ca2+ channels via Gbeta/gamma subunits"/>
</dbReference>
<dbReference type="BioGRID-ORCS" id="14702">
    <property type="hits" value="1 hit in 77 CRISPR screens"/>
</dbReference>
<dbReference type="CD-CODE" id="CE726F99">
    <property type="entry name" value="Postsynaptic density"/>
</dbReference>
<dbReference type="ChiTaRS" id="Gng2">
    <property type="organism name" value="mouse"/>
</dbReference>
<dbReference type="PRO" id="PR:P63213"/>
<dbReference type="Proteomes" id="UP000000589">
    <property type="component" value="Chromosome 14"/>
</dbReference>
<dbReference type="RNAct" id="P63213">
    <property type="molecule type" value="protein"/>
</dbReference>
<dbReference type="Bgee" id="ENSMUSG00000043004">
    <property type="expression patterns" value="Expressed in cortical plate and 237 other cell types or tissues"/>
</dbReference>
<dbReference type="GO" id="GO:0005834">
    <property type="term" value="C:heterotrimeric G-protein complex"/>
    <property type="evidence" value="ECO:0000266"/>
    <property type="project" value="MGI"/>
</dbReference>
<dbReference type="GO" id="GO:0005886">
    <property type="term" value="C:plasma membrane"/>
    <property type="evidence" value="ECO:0000304"/>
    <property type="project" value="Reactome"/>
</dbReference>
<dbReference type="GO" id="GO:0045202">
    <property type="term" value="C:synapse"/>
    <property type="evidence" value="ECO:0000314"/>
    <property type="project" value="SynGO"/>
</dbReference>
<dbReference type="GO" id="GO:0031681">
    <property type="term" value="F:G-protein beta-subunit binding"/>
    <property type="evidence" value="ECO:0000250"/>
    <property type="project" value="CAFA"/>
</dbReference>
<dbReference type="GO" id="GO:0003924">
    <property type="term" value="F:GTPase activity"/>
    <property type="evidence" value="ECO:0000266"/>
    <property type="project" value="MGI"/>
</dbReference>
<dbReference type="GO" id="GO:0048144">
    <property type="term" value="P:fibroblast proliferation"/>
    <property type="evidence" value="ECO:0000314"/>
    <property type="project" value="MGI"/>
</dbReference>
<dbReference type="GO" id="GO:0007186">
    <property type="term" value="P:G protein-coupled receptor signaling pathway"/>
    <property type="evidence" value="ECO:0000314"/>
    <property type="project" value="MGI"/>
</dbReference>
<dbReference type="CDD" id="cd00068">
    <property type="entry name" value="GGL"/>
    <property type="match status" value="1"/>
</dbReference>
<dbReference type="FunFam" id="4.10.260.10:FF:000001">
    <property type="entry name" value="Guanine nucleotide-binding protein subunit gamma"/>
    <property type="match status" value="1"/>
</dbReference>
<dbReference type="Gene3D" id="4.10.260.10">
    <property type="entry name" value="Transducin (heterotrimeric G protein), gamma chain"/>
    <property type="match status" value="1"/>
</dbReference>
<dbReference type="InterPro" id="IPR015898">
    <property type="entry name" value="G-protein_gamma-like_dom"/>
</dbReference>
<dbReference type="InterPro" id="IPR036284">
    <property type="entry name" value="GGL_sf"/>
</dbReference>
<dbReference type="InterPro" id="IPR001770">
    <property type="entry name" value="Gprotein-gamma"/>
</dbReference>
<dbReference type="PANTHER" id="PTHR13809">
    <property type="entry name" value="GUANINE NUCLEOTIDE-BINDING PROTEIN GAMMA SUBUNIT"/>
    <property type="match status" value="1"/>
</dbReference>
<dbReference type="Pfam" id="PF00631">
    <property type="entry name" value="G-gamma"/>
    <property type="match status" value="1"/>
</dbReference>
<dbReference type="PRINTS" id="PR00321">
    <property type="entry name" value="GPROTEING"/>
</dbReference>
<dbReference type="SMART" id="SM01224">
    <property type="entry name" value="G_gamma"/>
    <property type="match status" value="1"/>
</dbReference>
<dbReference type="SMART" id="SM00224">
    <property type="entry name" value="GGL"/>
    <property type="match status" value="1"/>
</dbReference>
<dbReference type="SUPFAM" id="SSF48670">
    <property type="entry name" value="Transducin (heterotrimeric G protein), gamma chain"/>
    <property type="match status" value="1"/>
</dbReference>
<dbReference type="PROSITE" id="PS50058">
    <property type="entry name" value="G_PROTEIN_GAMMA"/>
    <property type="match status" value="1"/>
</dbReference>
<comment type="function">
    <text>Guanine nucleotide-binding proteins (G proteins) are involved as a modulator or transducer in various transmembrane signaling systems. The beta and gamma chains are required for the GTPase activity, for replacement of GDP by GTP, and for G protein-effector interaction.</text>
</comment>
<comment type="subunit">
    <text evidence="1 2">G proteins are composed of 3 units, alpha, beta and gamma (By similarity). In this context, interacts with GNB2 (By similarity). The heterodimer formed by GNB1 and GNG2 interacts with ARHGEF5 (By similarity). The heterodimer formed by GNB1 and GNG2 interacts with GRK2 (By similarity). Forms complexes with TAS2R14 and G-proteins; these complexes play a role in the perception of bitterness (By similarity). Component of the TAS2R14-GNAI1 complex, consisting of TAS2R14, GNAI1, GNB1 and GNG2 (By similarity). Component of the TAS2R14-GNAT3 complex, consisting of TAS2R14, GNAT3, GNB1 and GNG2 (By similarity). Component of the TAS2R14-GNAS2 complex, consisting of TAS2R14, GNAS2, GNB1 and GNG2 (By similarity).</text>
</comment>
<comment type="subcellular location">
    <subcellularLocation>
        <location evidence="3">Cell membrane</location>
        <topology evidence="3">Lipid-anchor</topology>
        <orientation evidence="3">Cytoplasmic side</orientation>
    </subcellularLocation>
</comment>
<comment type="tissue specificity">
    <text>Adrenal gland and brain.</text>
</comment>
<comment type="similarity">
    <text evidence="3">Belongs to the G protein gamma family.</text>
</comment>
<evidence type="ECO:0000250" key="1">
    <source>
        <dbReference type="UniProtKB" id="P59768"/>
    </source>
</evidence>
<evidence type="ECO:0000250" key="2">
    <source>
        <dbReference type="UniProtKB" id="P63212"/>
    </source>
</evidence>
<evidence type="ECO:0000305" key="3"/>
<evidence type="ECO:0007829" key="4">
    <source>
        <dbReference type="PDB" id="6RMV"/>
    </source>
</evidence>
<evidence type="ECO:0007829" key="5">
    <source>
        <dbReference type="PDB" id="8IHB"/>
    </source>
</evidence>
<reference key="1">
    <citation type="journal article" date="1999" name="Genomics">
        <title>Chromosomal mapping of five mouse G protein gamma subunits.</title>
        <authorList>
            <person name="Downes G.B."/>
            <person name="Gilbert D.J."/>
            <person name="Copeland N.G."/>
            <person name="Gautam N."/>
            <person name="Jenkins N.A."/>
        </authorList>
    </citation>
    <scope>NUCLEOTIDE SEQUENCE [GENOMIC DNA]</scope>
</reference>
<reference key="2">
    <citation type="journal article" date="2005" name="Science">
        <title>The transcriptional landscape of the mammalian genome.</title>
        <authorList>
            <person name="Carninci P."/>
            <person name="Kasukawa T."/>
            <person name="Katayama S."/>
            <person name="Gough J."/>
            <person name="Frith M.C."/>
            <person name="Maeda N."/>
            <person name="Oyama R."/>
            <person name="Ravasi T."/>
            <person name="Lenhard B."/>
            <person name="Wells C."/>
            <person name="Kodzius R."/>
            <person name="Shimokawa K."/>
            <person name="Bajic V.B."/>
            <person name="Brenner S.E."/>
            <person name="Batalov S."/>
            <person name="Forrest A.R."/>
            <person name="Zavolan M."/>
            <person name="Davis M.J."/>
            <person name="Wilming L.G."/>
            <person name="Aidinis V."/>
            <person name="Allen J.E."/>
            <person name="Ambesi-Impiombato A."/>
            <person name="Apweiler R."/>
            <person name="Aturaliya R.N."/>
            <person name="Bailey T.L."/>
            <person name="Bansal M."/>
            <person name="Baxter L."/>
            <person name="Beisel K.W."/>
            <person name="Bersano T."/>
            <person name="Bono H."/>
            <person name="Chalk A.M."/>
            <person name="Chiu K.P."/>
            <person name="Choudhary V."/>
            <person name="Christoffels A."/>
            <person name="Clutterbuck D.R."/>
            <person name="Crowe M.L."/>
            <person name="Dalla E."/>
            <person name="Dalrymple B.P."/>
            <person name="de Bono B."/>
            <person name="Della Gatta G."/>
            <person name="di Bernardo D."/>
            <person name="Down T."/>
            <person name="Engstrom P."/>
            <person name="Fagiolini M."/>
            <person name="Faulkner G."/>
            <person name="Fletcher C.F."/>
            <person name="Fukushima T."/>
            <person name="Furuno M."/>
            <person name="Futaki S."/>
            <person name="Gariboldi M."/>
            <person name="Georgii-Hemming P."/>
            <person name="Gingeras T.R."/>
            <person name="Gojobori T."/>
            <person name="Green R.E."/>
            <person name="Gustincich S."/>
            <person name="Harbers M."/>
            <person name="Hayashi Y."/>
            <person name="Hensch T.K."/>
            <person name="Hirokawa N."/>
            <person name="Hill D."/>
            <person name="Huminiecki L."/>
            <person name="Iacono M."/>
            <person name="Ikeo K."/>
            <person name="Iwama A."/>
            <person name="Ishikawa T."/>
            <person name="Jakt M."/>
            <person name="Kanapin A."/>
            <person name="Katoh M."/>
            <person name="Kawasawa Y."/>
            <person name="Kelso J."/>
            <person name="Kitamura H."/>
            <person name="Kitano H."/>
            <person name="Kollias G."/>
            <person name="Krishnan S.P."/>
            <person name="Kruger A."/>
            <person name="Kummerfeld S.K."/>
            <person name="Kurochkin I.V."/>
            <person name="Lareau L.F."/>
            <person name="Lazarevic D."/>
            <person name="Lipovich L."/>
            <person name="Liu J."/>
            <person name="Liuni S."/>
            <person name="McWilliam S."/>
            <person name="Madan Babu M."/>
            <person name="Madera M."/>
            <person name="Marchionni L."/>
            <person name="Matsuda H."/>
            <person name="Matsuzawa S."/>
            <person name="Miki H."/>
            <person name="Mignone F."/>
            <person name="Miyake S."/>
            <person name="Morris K."/>
            <person name="Mottagui-Tabar S."/>
            <person name="Mulder N."/>
            <person name="Nakano N."/>
            <person name="Nakauchi H."/>
            <person name="Ng P."/>
            <person name="Nilsson R."/>
            <person name="Nishiguchi S."/>
            <person name="Nishikawa S."/>
            <person name="Nori F."/>
            <person name="Ohara O."/>
            <person name="Okazaki Y."/>
            <person name="Orlando V."/>
            <person name="Pang K.C."/>
            <person name="Pavan W.J."/>
            <person name="Pavesi G."/>
            <person name="Pesole G."/>
            <person name="Petrovsky N."/>
            <person name="Piazza S."/>
            <person name="Reed J."/>
            <person name="Reid J.F."/>
            <person name="Ring B.Z."/>
            <person name="Ringwald M."/>
            <person name="Rost B."/>
            <person name="Ruan Y."/>
            <person name="Salzberg S.L."/>
            <person name="Sandelin A."/>
            <person name="Schneider C."/>
            <person name="Schoenbach C."/>
            <person name="Sekiguchi K."/>
            <person name="Semple C.A."/>
            <person name="Seno S."/>
            <person name="Sessa L."/>
            <person name="Sheng Y."/>
            <person name="Shibata Y."/>
            <person name="Shimada H."/>
            <person name="Shimada K."/>
            <person name="Silva D."/>
            <person name="Sinclair B."/>
            <person name="Sperling S."/>
            <person name="Stupka E."/>
            <person name="Sugiura K."/>
            <person name="Sultana R."/>
            <person name="Takenaka Y."/>
            <person name="Taki K."/>
            <person name="Tammoja K."/>
            <person name="Tan S.L."/>
            <person name="Tang S."/>
            <person name="Taylor M.S."/>
            <person name="Tegner J."/>
            <person name="Teichmann S.A."/>
            <person name="Ueda H.R."/>
            <person name="van Nimwegen E."/>
            <person name="Verardo R."/>
            <person name="Wei C.L."/>
            <person name="Yagi K."/>
            <person name="Yamanishi H."/>
            <person name="Zabarovsky E."/>
            <person name="Zhu S."/>
            <person name="Zimmer A."/>
            <person name="Hide W."/>
            <person name="Bult C."/>
            <person name="Grimmond S.M."/>
            <person name="Teasdale R.D."/>
            <person name="Liu E.T."/>
            <person name="Brusic V."/>
            <person name="Quackenbush J."/>
            <person name="Wahlestedt C."/>
            <person name="Mattick J.S."/>
            <person name="Hume D.A."/>
            <person name="Kai C."/>
            <person name="Sasaki D."/>
            <person name="Tomaru Y."/>
            <person name="Fukuda S."/>
            <person name="Kanamori-Katayama M."/>
            <person name="Suzuki M."/>
            <person name="Aoki J."/>
            <person name="Arakawa T."/>
            <person name="Iida J."/>
            <person name="Imamura K."/>
            <person name="Itoh M."/>
            <person name="Kato T."/>
            <person name="Kawaji H."/>
            <person name="Kawagashira N."/>
            <person name="Kawashima T."/>
            <person name="Kojima M."/>
            <person name="Kondo S."/>
            <person name="Konno H."/>
            <person name="Nakano K."/>
            <person name="Ninomiya N."/>
            <person name="Nishio T."/>
            <person name="Okada M."/>
            <person name="Plessy C."/>
            <person name="Shibata K."/>
            <person name="Shiraki T."/>
            <person name="Suzuki S."/>
            <person name="Tagami M."/>
            <person name="Waki K."/>
            <person name="Watahiki A."/>
            <person name="Okamura-Oho Y."/>
            <person name="Suzuki H."/>
            <person name="Kawai J."/>
            <person name="Hayashizaki Y."/>
        </authorList>
    </citation>
    <scope>NUCLEOTIDE SEQUENCE [LARGE SCALE MRNA]</scope>
    <source>
        <strain>C57BL/6J</strain>
        <tissue>Cerebellum</tissue>
        <tissue>Embryo</tissue>
    </source>
</reference>
<reference key="3">
    <citation type="journal article" date="2004" name="Genome Res.">
        <title>The status, quality, and expansion of the NIH full-length cDNA project: the Mammalian Gene Collection (MGC).</title>
        <authorList>
            <consortium name="The MGC Project Team"/>
        </authorList>
    </citation>
    <scope>NUCLEOTIDE SEQUENCE [LARGE SCALE MRNA]</scope>
    <source>
        <tissue>Mammary tumor</tissue>
    </source>
</reference>
<reference key="4">
    <citation type="journal article" date="1996" name="Mol. Reprod. Dev.">
        <title>G protein gene expression during mouse oocyte growth and maturation, and preimplantation embryo development.</title>
        <authorList>
            <person name="Williams C.J."/>
            <person name="Schultz R.M."/>
            <person name="Kopf G.S."/>
        </authorList>
    </citation>
    <scope>NUCLEOTIDE SEQUENCE [MRNA] OF 18-52</scope>
    <source>
        <strain>CF-1 / Harlan</strain>
        <tissue>Embryo</tissue>
    </source>
</reference>
<reference key="5">
    <citation type="journal article" date="2010" name="Cell">
        <title>A tissue-specific atlas of mouse protein phosphorylation and expression.</title>
        <authorList>
            <person name="Huttlin E.L."/>
            <person name="Jedrychowski M.P."/>
            <person name="Elias J.E."/>
            <person name="Goswami T."/>
            <person name="Rad R."/>
            <person name="Beausoleil S.A."/>
            <person name="Villen J."/>
            <person name="Haas W."/>
            <person name="Sowa M.E."/>
            <person name="Gygi S.P."/>
        </authorList>
    </citation>
    <scope>IDENTIFICATION BY MASS SPECTROMETRY [LARGE SCALE ANALYSIS]</scope>
    <source>
        <tissue>Brain</tissue>
        <tissue>Lung</tissue>
        <tissue>Testis</tissue>
    </source>
</reference>
<name>GBG2_MOUSE</name>
<gene>
    <name type="primary">Gng2</name>
</gene>
<proteinExistence type="evidence at protein level"/>
<accession>P63213</accession>
<accession>P16874</accession>
<accession>Q3TYE8</accession>
<accession>Q61013</accession>
<accession>Q9TS47</accession>
<sequence length="71" mass="7850">MASNNTASIAQARKLVEQLKMEANIDRIKVSKAAADLMAYCEAHAKEDPLLTPVPASENPFREKKFFCAIL</sequence>